<protein>
    <recommendedName>
        <fullName>Tyrosine-protein phosphatase vhp-1</fullName>
        <ecNumber>3.1.3.48</ecNumber>
    </recommendedName>
    <alternativeName>
        <fullName>Vh1 dual specificity phosphatase family protein 1</fullName>
    </alternativeName>
</protein>
<evidence type="ECO:0000255" key="1">
    <source>
        <dbReference type="PROSITE-ProRule" id="PRU00160"/>
    </source>
</evidence>
<evidence type="ECO:0000255" key="2">
    <source>
        <dbReference type="PROSITE-ProRule" id="PRU00173"/>
    </source>
</evidence>
<evidence type="ECO:0000255" key="3">
    <source>
        <dbReference type="PROSITE-ProRule" id="PRU10044"/>
    </source>
</evidence>
<evidence type="ECO:0000256" key="4">
    <source>
        <dbReference type="SAM" id="MobiDB-lite"/>
    </source>
</evidence>
<evidence type="ECO:0000269" key="5">
    <source>
    </source>
</evidence>
<evidence type="ECO:0000269" key="6">
    <source>
    </source>
</evidence>
<evidence type="ECO:0000305" key="7"/>
<name>VHP1_CAEEL</name>
<comment type="function">
    <text evidence="5 6">Acts preferentially on the c-Jun N-terminal kinase (JNK) and p38 MAPKs. Plays an important role in the heavy metal stress response and in axon regeneration by negatively regulating the kgb-1 (JNK-like) and the pmk-1 (p38-type) MAPK signaling pathways.</text>
</comment>
<comment type="catalytic activity">
    <reaction evidence="3">
        <text>O-phospho-L-tyrosyl-[protein] + H2O = L-tyrosyl-[protein] + phosphate</text>
        <dbReference type="Rhea" id="RHEA:10684"/>
        <dbReference type="Rhea" id="RHEA-COMP:10136"/>
        <dbReference type="Rhea" id="RHEA-COMP:20101"/>
        <dbReference type="ChEBI" id="CHEBI:15377"/>
        <dbReference type="ChEBI" id="CHEBI:43474"/>
        <dbReference type="ChEBI" id="CHEBI:46858"/>
        <dbReference type="ChEBI" id="CHEBI:61978"/>
        <dbReference type="EC" id="3.1.3.48"/>
    </reaction>
</comment>
<comment type="subunit">
    <text evidence="6">May interact with pmk-3.</text>
</comment>
<comment type="alternative products">
    <event type="alternative splicing"/>
    <isoform>
        <id>Q10038-1</id>
        <name>a</name>
        <sequence type="displayed"/>
    </isoform>
    <isoform>
        <id>Q10038-2</id>
        <name>b</name>
        <sequence type="described" ref="VSP_014014"/>
    </isoform>
    <isoform>
        <id>Q10038-3</id>
        <name>c</name>
        <sequence type="described" ref="VSP_014013 VSP_014015"/>
    </isoform>
</comment>
<comment type="tissue specificity">
    <text evidence="5">Expressed in the pharynx, intestine, neurons and vulval hypodermal cells.</text>
</comment>
<comment type="developmental stage">
    <text evidence="5">Expressed throughout development.</text>
</comment>
<comment type="similarity">
    <text evidence="7">Belongs to the protein-tyrosine phosphatase family. Non-receptor class dual specificity subfamily.</text>
</comment>
<accession>Q10038</accession>
<accession>Q8IG35</accession>
<accession>Q8ST18</accession>
<accession>Q8ST19</accession>
<keyword id="KW-0025">Alternative splicing</keyword>
<keyword id="KW-0378">Hydrolase</keyword>
<keyword id="KW-0904">Protein phosphatase</keyword>
<keyword id="KW-1185">Reference proteome</keyword>
<gene>
    <name type="primary">vhp-1</name>
    <name type="ORF">F08B1.1</name>
</gene>
<organism>
    <name type="scientific">Caenorhabditis elegans</name>
    <dbReference type="NCBI Taxonomy" id="6239"/>
    <lineage>
        <taxon>Eukaryota</taxon>
        <taxon>Metazoa</taxon>
        <taxon>Ecdysozoa</taxon>
        <taxon>Nematoda</taxon>
        <taxon>Chromadorea</taxon>
        <taxon>Rhabditida</taxon>
        <taxon>Rhabditina</taxon>
        <taxon>Rhabditomorpha</taxon>
        <taxon>Rhabditoidea</taxon>
        <taxon>Rhabditidae</taxon>
        <taxon>Peloderinae</taxon>
        <taxon>Caenorhabditis</taxon>
    </lineage>
</organism>
<proteinExistence type="evidence at protein level"/>
<reference key="1">
    <citation type="journal article" date="2004" name="EMBO J.">
        <title>The Caenorhabditis elegans MAPK phosphatase VHP-1 mediates a novel JNK-like signaling pathway in stress response.</title>
        <authorList>
            <person name="Mizuno T."/>
            <person name="Hisamoto N."/>
            <person name="Terada T."/>
            <person name="Kondo T."/>
            <person name="Adachi M."/>
            <person name="Nishida E."/>
            <person name="Kim D.H."/>
            <person name="Ausubel F.M."/>
            <person name="Matsumoto K."/>
        </authorList>
    </citation>
    <scope>NUCLEOTIDE SEQUENCE [MRNA] (ISOFORM A)</scope>
    <scope>FUNCTION</scope>
    <scope>TISSUE SPECIFICITY</scope>
    <scope>DEVELOPMENTAL STAGE</scope>
    <scope>MUTAGENESIS OF CYS-262</scope>
</reference>
<reference key="2">
    <citation type="journal article" date="1998" name="Science">
        <title>Genome sequence of the nematode C. elegans: a platform for investigating biology.</title>
        <authorList>
            <consortium name="The C. elegans sequencing consortium"/>
        </authorList>
    </citation>
    <scope>NUCLEOTIDE SEQUENCE [LARGE SCALE GENOMIC DNA]</scope>
    <scope>ALTERNATIVE SPLICING</scope>
    <source>
        <strain>Bristol N2</strain>
    </source>
</reference>
<reference key="3">
    <citation type="journal article" date="2011" name="Proc. Natl. Acad. Sci. U.S.A.">
        <title>Axon regeneration requires coordinate activation of p38 and JNK MAPK pathways.</title>
        <authorList>
            <person name="Nix P."/>
            <person name="Hisamoto N."/>
            <person name="Matsumoto K."/>
            <person name="Bastiani M."/>
        </authorList>
    </citation>
    <scope>FUNCTION</scope>
    <scope>INTERACTION WITH PMK-3</scope>
    <scope>MUTAGENESIS OF CYS-262</scope>
</reference>
<sequence>MTVLDTVTISTCGLAALIREAPDTTLVVDCRGFTEYNESHVRHSMNAFFSKLIRRRLFENKLDDNCLIHQLMSCSSGCTKMDEKLDLVLYAEEDKPRGNKRRIASCNAPESTAKIMRVLRERLEDTDKFRSVMVLEGGFKQFAQQYPQLCESSEGMTRLPQSLSQPCLSQPTGDGITLITPNIYLGSQIDSLDETMLDALDISVVINLSMTCPKSVCIKEDKNFMRIPVNDSYQEKLSPYFPMAYEFLEKCRRAGKKCLIHCLAGISRSPTLAISYIMRYMKMGSDDAYRYVKERRPSISPNFNFMGQLLEYENVLIKDHVLDYNQASRPHRHMDYYGPSDLCPPKVPKSASSNCVFPGSTHDESSPSSPSVSEGSAASEPETSSSAASSSSTASAPPSMPSTSEQGTSSGTVNVNGKRNMTMDLGLPHRPKALGLPSRIGTSVAELPSPSTELSRLSFNGPEAIAPSTPILNFTNPCFNSPIIPVASSSREVILTLPTPAASSSSSTSSEPSFDFSSFESSSSSSIVVENPFFASTEVPAGSSSISTPSGSQSTPASASSSAASRCRMKGFFKVFSKKAPASTSTPASSTPGTSRAARPECLRSSGIIISAPVLAITEEEDAESPESGFNEPEVGEEDDDSVSICSTSSLEIPCHQ</sequence>
<dbReference type="EC" id="3.1.3.48"/>
<dbReference type="EMBL" id="AY585194">
    <property type="protein sequence ID" value="AAS91377.1"/>
    <property type="molecule type" value="mRNA"/>
</dbReference>
<dbReference type="EMBL" id="FO081082">
    <property type="protein sequence ID" value="CCD68973.1"/>
    <property type="molecule type" value="Genomic_DNA"/>
</dbReference>
<dbReference type="EMBL" id="FO081082">
    <property type="protein sequence ID" value="CCD68974.1"/>
    <property type="molecule type" value="Genomic_DNA"/>
</dbReference>
<dbReference type="EMBL" id="FO081082">
    <property type="protein sequence ID" value="CCD68975.1"/>
    <property type="molecule type" value="Genomic_DNA"/>
</dbReference>
<dbReference type="PIR" id="T15969">
    <property type="entry name" value="T15969"/>
</dbReference>
<dbReference type="RefSeq" id="NP_001364748.1">
    <molecule id="Q10038-1"/>
    <property type="nucleotide sequence ID" value="NM_001377798.2"/>
</dbReference>
<dbReference type="RefSeq" id="NP_494997.1">
    <property type="nucleotide sequence ID" value="NM_062596.4"/>
</dbReference>
<dbReference type="RefSeq" id="NP_494998.1">
    <molecule id="Q10038-2"/>
    <property type="nucleotide sequence ID" value="NM_062597.4"/>
</dbReference>
<dbReference type="RefSeq" id="NP_871926.1">
    <property type="nucleotide sequence ID" value="NM_182126.3"/>
</dbReference>
<dbReference type="SMR" id="Q10038"/>
<dbReference type="BioGRID" id="39249">
    <property type="interactions" value="4"/>
</dbReference>
<dbReference type="DIP" id="DIP-59690N"/>
<dbReference type="FunCoup" id="Q10038">
    <property type="interactions" value="945"/>
</dbReference>
<dbReference type="IntAct" id="Q10038">
    <property type="interactions" value="1"/>
</dbReference>
<dbReference type="STRING" id="6239.F08B1.1e.1"/>
<dbReference type="iPTMnet" id="Q10038"/>
<dbReference type="PaxDb" id="6239-F08B1.1a.2"/>
<dbReference type="PeptideAtlas" id="Q10038"/>
<dbReference type="EnsemblMetazoa" id="F08B1.1a.1">
    <molecule id="Q10038-1"/>
    <property type="protein sequence ID" value="F08B1.1a.1"/>
    <property type="gene ID" value="WBGene00006923"/>
</dbReference>
<dbReference type="EnsemblMetazoa" id="F08B1.1a.2">
    <molecule id="Q10038-1"/>
    <property type="protein sequence ID" value="F08B1.1a.2"/>
    <property type="gene ID" value="WBGene00006923"/>
</dbReference>
<dbReference type="EnsemblMetazoa" id="F08B1.1b.1">
    <molecule id="Q10038-2"/>
    <property type="protein sequence ID" value="F08B1.1b.1"/>
    <property type="gene ID" value="WBGene00006923"/>
</dbReference>
<dbReference type="GeneID" id="173904"/>
<dbReference type="KEGG" id="cel:CELE_F08B1.1"/>
<dbReference type="UCSC" id="F08B1.1a.3">
    <molecule id="Q10038-1"/>
    <property type="organism name" value="c. elegans"/>
</dbReference>
<dbReference type="AGR" id="WB:WBGene00006923"/>
<dbReference type="CTD" id="173904"/>
<dbReference type="WormBase" id="F08B1.1a">
    <molecule id="Q10038-1"/>
    <property type="protein sequence ID" value="CE27918"/>
    <property type="gene ID" value="WBGene00006923"/>
    <property type="gene designation" value="vhp-1"/>
</dbReference>
<dbReference type="WormBase" id="F08B1.1b">
    <molecule id="Q10038-2"/>
    <property type="protein sequence ID" value="CE27919"/>
    <property type="gene ID" value="WBGene00006923"/>
    <property type="gene designation" value="vhp-1"/>
</dbReference>
<dbReference type="eggNOG" id="KOG1716">
    <property type="taxonomic scope" value="Eukaryota"/>
</dbReference>
<dbReference type="GeneTree" id="ENSGT00940000167194"/>
<dbReference type="HOGENOM" id="CLU_408947_0_0_1"/>
<dbReference type="InParanoid" id="Q10038"/>
<dbReference type="OMA" id="CNAPEST"/>
<dbReference type="OrthoDB" id="165342at2759"/>
<dbReference type="PhylomeDB" id="Q10038"/>
<dbReference type="Reactome" id="R-CEL-112409">
    <property type="pathway name" value="RAF-independent MAPK1/3 activation"/>
</dbReference>
<dbReference type="Reactome" id="R-CEL-5675221">
    <property type="pathway name" value="Negative regulation of MAPK pathway"/>
</dbReference>
<dbReference type="SignaLink" id="Q10038"/>
<dbReference type="PRO" id="PR:Q10038"/>
<dbReference type="Proteomes" id="UP000001940">
    <property type="component" value="Chromosome II"/>
</dbReference>
<dbReference type="Bgee" id="WBGene00006923">
    <property type="expression patterns" value="Expressed in pharyngeal muscle cell (C elegans) and 3 other cell types or tissues"/>
</dbReference>
<dbReference type="ExpressionAtlas" id="Q10038">
    <property type="expression patterns" value="baseline and differential"/>
</dbReference>
<dbReference type="GO" id="GO:0005737">
    <property type="term" value="C:cytoplasm"/>
    <property type="evidence" value="ECO:0000250"/>
    <property type="project" value="WormBase"/>
</dbReference>
<dbReference type="GO" id="GO:0005634">
    <property type="term" value="C:nucleus"/>
    <property type="evidence" value="ECO:0000250"/>
    <property type="project" value="WormBase"/>
</dbReference>
<dbReference type="GO" id="GO:0008579">
    <property type="term" value="F:JUN kinase phosphatase activity"/>
    <property type="evidence" value="ECO:0000314"/>
    <property type="project" value="WormBase"/>
</dbReference>
<dbReference type="GO" id="GO:0033550">
    <property type="term" value="F:MAP kinase tyrosine phosphatase activity"/>
    <property type="evidence" value="ECO:0000318"/>
    <property type="project" value="GO_Central"/>
</dbReference>
<dbReference type="GO" id="GO:0017017">
    <property type="term" value="F:MAP kinase tyrosine/serine/threonine phosphatase activity"/>
    <property type="evidence" value="ECO:0000314"/>
    <property type="project" value="WormBase"/>
</dbReference>
<dbReference type="GO" id="GO:0008330">
    <property type="term" value="F:protein tyrosine/threonine phosphatase activity"/>
    <property type="evidence" value="ECO:0000318"/>
    <property type="project" value="GO_Central"/>
</dbReference>
<dbReference type="GO" id="GO:0008340">
    <property type="term" value="P:determination of adult lifespan"/>
    <property type="evidence" value="ECO:0000315"/>
    <property type="project" value="UniProtKB"/>
</dbReference>
<dbReference type="GO" id="GO:0048692">
    <property type="term" value="P:negative regulation of axon extension involved in regeneration"/>
    <property type="evidence" value="ECO:0000315"/>
    <property type="project" value="UniProtKB"/>
</dbReference>
<dbReference type="GO" id="GO:1900425">
    <property type="term" value="P:negative regulation of defense response to bacterium"/>
    <property type="evidence" value="ECO:0000315"/>
    <property type="project" value="UniProtKB"/>
</dbReference>
<dbReference type="GO" id="GO:0046329">
    <property type="term" value="P:negative regulation of JNK cascade"/>
    <property type="evidence" value="ECO:0000314"/>
    <property type="project" value="WormBase"/>
</dbReference>
<dbReference type="GO" id="GO:0043409">
    <property type="term" value="P:negative regulation of MAPK cascade"/>
    <property type="evidence" value="ECO:0000318"/>
    <property type="project" value="GO_Central"/>
</dbReference>
<dbReference type="GO" id="GO:1903753">
    <property type="term" value="P:negative regulation of p38MAPK cascade"/>
    <property type="evidence" value="ECO:0000315"/>
    <property type="project" value="UniProtKB"/>
</dbReference>
<dbReference type="GO" id="GO:1900181">
    <property type="term" value="P:negative regulation of protein localization to nucleus"/>
    <property type="evidence" value="ECO:0000315"/>
    <property type="project" value="UniProtKB"/>
</dbReference>
<dbReference type="GO" id="GO:0001933">
    <property type="term" value="P:negative regulation of protein phosphorylation"/>
    <property type="evidence" value="ECO:0000315"/>
    <property type="project" value="UniProtKB"/>
</dbReference>
<dbReference type="GO" id="GO:1903854">
    <property type="term" value="P:negative regulation of stress response to copper ion"/>
    <property type="evidence" value="ECO:0000315"/>
    <property type="project" value="WormBase"/>
</dbReference>
<dbReference type="GO" id="GO:0002119">
    <property type="term" value="P:nematode larval development"/>
    <property type="evidence" value="ECO:0000315"/>
    <property type="project" value="WormBase"/>
</dbReference>
<dbReference type="GO" id="GO:1900426">
    <property type="term" value="P:positive regulation of defense response to bacterium"/>
    <property type="evidence" value="ECO:0000315"/>
    <property type="project" value="UniProtKB"/>
</dbReference>
<dbReference type="GO" id="GO:1900182">
    <property type="term" value="P:positive regulation of protein localization to nucleus"/>
    <property type="evidence" value="ECO:0000315"/>
    <property type="project" value="UniProtKB"/>
</dbReference>
<dbReference type="GO" id="GO:0030163">
    <property type="term" value="P:protein catabolic process"/>
    <property type="evidence" value="ECO:0000315"/>
    <property type="project" value="UniProtKB"/>
</dbReference>
<dbReference type="GO" id="GO:1900180">
    <property type="term" value="P:regulation of protein localization to nucleus"/>
    <property type="evidence" value="ECO:0000316"/>
    <property type="project" value="UniProtKB"/>
</dbReference>
<dbReference type="GO" id="GO:0046686">
    <property type="term" value="P:response to cadmium ion"/>
    <property type="evidence" value="ECO:0000315"/>
    <property type="project" value="UniProtKB"/>
</dbReference>
<dbReference type="GO" id="GO:0046688">
    <property type="term" value="P:response to copper ion"/>
    <property type="evidence" value="ECO:0000316"/>
    <property type="project" value="WormBase"/>
</dbReference>
<dbReference type="GO" id="GO:0006986">
    <property type="term" value="P:response to unfolded protein"/>
    <property type="evidence" value="ECO:0000315"/>
    <property type="project" value="UniProtKB"/>
</dbReference>
<dbReference type="GO" id="GO:0007165">
    <property type="term" value="P:signal transduction"/>
    <property type="evidence" value="ECO:0000318"/>
    <property type="project" value="GO_Central"/>
</dbReference>
<dbReference type="CDD" id="cd01446">
    <property type="entry name" value="DSP_MapKP"/>
    <property type="match status" value="1"/>
</dbReference>
<dbReference type="CDD" id="cd14568">
    <property type="entry name" value="DSP_MKP_classIII"/>
    <property type="match status" value="1"/>
</dbReference>
<dbReference type="FunFam" id="3.40.250.10:FF:000094">
    <property type="entry name" value="Tyrosine-protein phosphatase vhp-1"/>
    <property type="match status" value="1"/>
</dbReference>
<dbReference type="Gene3D" id="3.90.190.10">
    <property type="entry name" value="Protein tyrosine phosphatase superfamily"/>
    <property type="match status" value="1"/>
</dbReference>
<dbReference type="Gene3D" id="3.40.250.10">
    <property type="entry name" value="Rhodanese-like domain"/>
    <property type="match status" value="1"/>
</dbReference>
<dbReference type="InterPro" id="IPR000340">
    <property type="entry name" value="Dual-sp_phosphatase_cat-dom"/>
</dbReference>
<dbReference type="InterPro" id="IPR008343">
    <property type="entry name" value="MKP"/>
</dbReference>
<dbReference type="InterPro" id="IPR029021">
    <property type="entry name" value="Prot-tyrosine_phosphatase-like"/>
</dbReference>
<dbReference type="InterPro" id="IPR001763">
    <property type="entry name" value="Rhodanese-like_dom"/>
</dbReference>
<dbReference type="InterPro" id="IPR036873">
    <property type="entry name" value="Rhodanese-like_dom_sf"/>
</dbReference>
<dbReference type="InterPro" id="IPR016130">
    <property type="entry name" value="Tyr_Pase_AS"/>
</dbReference>
<dbReference type="InterPro" id="IPR000387">
    <property type="entry name" value="Tyr_Pase_dom"/>
</dbReference>
<dbReference type="InterPro" id="IPR020422">
    <property type="entry name" value="TYR_PHOSPHATASE_DUAL_dom"/>
</dbReference>
<dbReference type="PANTHER" id="PTHR10159">
    <property type="entry name" value="DUAL SPECIFICITY PROTEIN PHOSPHATASE"/>
    <property type="match status" value="1"/>
</dbReference>
<dbReference type="PANTHER" id="PTHR10159:SF533">
    <property type="entry name" value="TYROSINE-PROTEIN PHOSPHATASE VHP-1"/>
    <property type="match status" value="1"/>
</dbReference>
<dbReference type="Pfam" id="PF00782">
    <property type="entry name" value="DSPc"/>
    <property type="match status" value="1"/>
</dbReference>
<dbReference type="Pfam" id="PF00581">
    <property type="entry name" value="Rhodanese"/>
    <property type="match status" value="1"/>
</dbReference>
<dbReference type="PRINTS" id="PR01764">
    <property type="entry name" value="MAPKPHPHTASE"/>
</dbReference>
<dbReference type="SMART" id="SM00195">
    <property type="entry name" value="DSPc"/>
    <property type="match status" value="1"/>
</dbReference>
<dbReference type="SMART" id="SM00450">
    <property type="entry name" value="RHOD"/>
    <property type="match status" value="1"/>
</dbReference>
<dbReference type="SUPFAM" id="SSF52799">
    <property type="entry name" value="(Phosphotyrosine protein) phosphatases II"/>
    <property type="match status" value="1"/>
</dbReference>
<dbReference type="SUPFAM" id="SSF52821">
    <property type="entry name" value="Rhodanese/Cell cycle control phosphatase"/>
    <property type="match status" value="1"/>
</dbReference>
<dbReference type="PROSITE" id="PS50206">
    <property type="entry name" value="RHODANESE_3"/>
    <property type="match status" value="1"/>
</dbReference>
<dbReference type="PROSITE" id="PS00383">
    <property type="entry name" value="TYR_PHOSPHATASE_1"/>
    <property type="match status" value="1"/>
</dbReference>
<dbReference type="PROSITE" id="PS50056">
    <property type="entry name" value="TYR_PHOSPHATASE_2"/>
    <property type="match status" value="1"/>
</dbReference>
<dbReference type="PROSITE" id="PS50054">
    <property type="entry name" value="TYR_PHOSPHATASE_DUAL"/>
    <property type="match status" value="1"/>
</dbReference>
<feature type="chain" id="PRO_0000094925" description="Tyrosine-protein phosphatase vhp-1">
    <location>
        <begin position="1"/>
        <end position="657"/>
    </location>
</feature>
<feature type="domain" description="Rhodanese" evidence="2">
    <location>
        <begin position="21"/>
        <end position="151"/>
    </location>
</feature>
<feature type="domain" description="Tyrosine-protein phosphatase" evidence="1">
    <location>
        <begin position="175"/>
        <end position="318"/>
    </location>
</feature>
<feature type="region of interest" description="Disordered" evidence="4">
    <location>
        <begin position="353"/>
        <end position="426"/>
    </location>
</feature>
<feature type="region of interest" description="Disordered" evidence="4">
    <location>
        <begin position="539"/>
        <end position="563"/>
    </location>
</feature>
<feature type="region of interest" description="Disordered" evidence="4">
    <location>
        <begin position="581"/>
        <end position="657"/>
    </location>
</feature>
<feature type="compositionally biased region" description="Low complexity" evidence="4">
    <location>
        <begin position="366"/>
        <end position="405"/>
    </location>
</feature>
<feature type="compositionally biased region" description="Polar residues" evidence="4">
    <location>
        <begin position="406"/>
        <end position="419"/>
    </location>
</feature>
<feature type="compositionally biased region" description="Low complexity" evidence="4">
    <location>
        <begin position="542"/>
        <end position="563"/>
    </location>
</feature>
<feature type="compositionally biased region" description="Low complexity" evidence="4">
    <location>
        <begin position="581"/>
        <end position="597"/>
    </location>
</feature>
<feature type="active site" description="Phosphocysteine intermediate" evidence="1">
    <location>
        <position position="262"/>
    </location>
</feature>
<feature type="splice variant" id="VSP_014013" description="In isoform c." evidence="7">
    <location>
        <begin position="1"/>
        <end position="155"/>
    </location>
</feature>
<feature type="splice variant" id="VSP_014014" description="In isoform b." evidence="7">
    <original>MTVLDTVTISTCGLAALIREAPDTTLVVDCRGFTEYNESHVRHSMNAFFSKLIRRRLFENKLDDNCLIHQLMSCSSGCTKMDEKLDLVLYAEEDKPRGNKRRIASCNAPESTAKIMRVLRERLEDTDKFRSVMVLE</original>
    <variation>MGGQPFEAFRKNRKRKKTKNKKKRRNNNNSKNKTPNTFPNEIEEQDPVSSLPTFPAKKFGLKLQLTLTSSPTNSSSPISSSSPTN</variation>
    <location>
        <begin position="1"/>
        <end position="136"/>
    </location>
</feature>
<feature type="splice variant" id="VSP_014015" description="In isoform c." evidence="7">
    <original>ASSTPGTSRAARPECLRSSGIIISAPVLAITEEEDAESPESGFNEPEVGEEDDDSVSICSTSSLEIPCHQ</original>
    <variation>VSIMKLH</variation>
    <location>
        <begin position="588"/>
        <end position="657"/>
    </location>
</feature>
<feature type="mutagenesis site" description="Loss of kgb-1 inhibition. No effect on interaction with pmk-3." evidence="5 6">
    <original>C</original>
    <variation>S</variation>
    <location>
        <position position="262"/>
    </location>
</feature>